<reference key="1">
    <citation type="journal article" date="2003" name="Proc. Natl. Acad. Sci. U.S.A.">
        <title>Complete genome sequence of Lactobacillus plantarum WCFS1.</title>
        <authorList>
            <person name="Kleerebezem M."/>
            <person name="Boekhorst J."/>
            <person name="van Kranenburg R."/>
            <person name="Molenaar D."/>
            <person name="Kuipers O.P."/>
            <person name="Leer R."/>
            <person name="Tarchini R."/>
            <person name="Peters S.A."/>
            <person name="Sandbrink H.M."/>
            <person name="Fiers M.W.E.J."/>
            <person name="Stiekema W."/>
            <person name="Klein Lankhorst R.M."/>
            <person name="Bron P.A."/>
            <person name="Hoffer S.M."/>
            <person name="Nierop Groot M.N."/>
            <person name="Kerkhoven R."/>
            <person name="De Vries M."/>
            <person name="Ursing B."/>
            <person name="De Vos W.M."/>
            <person name="Siezen R.J."/>
        </authorList>
    </citation>
    <scope>NUCLEOTIDE SEQUENCE [LARGE SCALE GENOMIC DNA]</scope>
    <source>
        <strain>ATCC BAA-793 / NCIMB 8826 / WCFS1</strain>
    </source>
</reference>
<reference key="2">
    <citation type="journal article" date="2012" name="J. Bacteriol.">
        <title>Complete resequencing and reannotation of the Lactobacillus plantarum WCFS1 genome.</title>
        <authorList>
            <person name="Siezen R.J."/>
            <person name="Francke C."/>
            <person name="Renckens B."/>
            <person name="Boekhorst J."/>
            <person name="Wels M."/>
            <person name="Kleerebezem M."/>
            <person name="van Hijum S.A."/>
        </authorList>
    </citation>
    <scope>NUCLEOTIDE SEQUENCE [LARGE SCALE GENOMIC DNA]</scope>
    <scope>GENOME REANNOTATION</scope>
    <source>
        <strain>ATCC BAA-793 / NCIMB 8826 / WCFS1</strain>
    </source>
</reference>
<feature type="chain" id="PRO_0000152639" description="Lysine--tRNA ligase">
    <location>
        <begin position="1"/>
        <end position="499"/>
    </location>
</feature>
<feature type="binding site" evidence="1">
    <location>
        <position position="407"/>
    </location>
    <ligand>
        <name>Mg(2+)</name>
        <dbReference type="ChEBI" id="CHEBI:18420"/>
        <label>1</label>
    </ligand>
</feature>
<feature type="binding site" evidence="1">
    <location>
        <position position="414"/>
    </location>
    <ligand>
        <name>Mg(2+)</name>
        <dbReference type="ChEBI" id="CHEBI:18420"/>
        <label>1</label>
    </ligand>
</feature>
<feature type="binding site" evidence="1">
    <location>
        <position position="414"/>
    </location>
    <ligand>
        <name>Mg(2+)</name>
        <dbReference type="ChEBI" id="CHEBI:18420"/>
        <label>2</label>
    </ligand>
</feature>
<organism>
    <name type="scientific">Lactiplantibacillus plantarum (strain ATCC BAA-793 / NCIMB 8826 / WCFS1)</name>
    <name type="common">Lactobacillus plantarum</name>
    <dbReference type="NCBI Taxonomy" id="220668"/>
    <lineage>
        <taxon>Bacteria</taxon>
        <taxon>Bacillati</taxon>
        <taxon>Bacillota</taxon>
        <taxon>Bacilli</taxon>
        <taxon>Lactobacillales</taxon>
        <taxon>Lactobacillaceae</taxon>
        <taxon>Lactiplantibacillus</taxon>
    </lineage>
</organism>
<protein>
    <recommendedName>
        <fullName evidence="1">Lysine--tRNA ligase</fullName>
        <ecNumber evidence="1">6.1.1.6</ecNumber>
    </recommendedName>
    <alternativeName>
        <fullName evidence="1">Lysyl-tRNA synthetase</fullName>
        <shortName evidence="1">LysRS</shortName>
    </alternativeName>
</protein>
<evidence type="ECO:0000255" key="1">
    <source>
        <dbReference type="HAMAP-Rule" id="MF_00252"/>
    </source>
</evidence>
<proteinExistence type="inferred from homology"/>
<name>SYK_LACPL</name>
<dbReference type="EC" id="6.1.1.6" evidence="1"/>
<dbReference type="EMBL" id="AL935263">
    <property type="protein sequence ID" value="CCC78038.1"/>
    <property type="molecule type" value="Genomic_DNA"/>
</dbReference>
<dbReference type="RefSeq" id="WP_003642090.1">
    <property type="nucleotide sequence ID" value="NC_004567.2"/>
</dbReference>
<dbReference type="RefSeq" id="YP_004888552.1">
    <property type="nucleotide sequence ID" value="NC_004567.2"/>
</dbReference>
<dbReference type="SMR" id="Q88Z28"/>
<dbReference type="STRING" id="220668.lp_0550"/>
<dbReference type="EnsemblBacteria" id="CCC78038">
    <property type="protein sequence ID" value="CCC78038"/>
    <property type="gene ID" value="lp_0550"/>
</dbReference>
<dbReference type="GeneID" id="89668194"/>
<dbReference type="KEGG" id="lpl:lp_0550"/>
<dbReference type="PATRIC" id="fig|220668.9.peg.456"/>
<dbReference type="eggNOG" id="COG1190">
    <property type="taxonomic scope" value="Bacteria"/>
</dbReference>
<dbReference type="HOGENOM" id="CLU_008255_6_0_9"/>
<dbReference type="OrthoDB" id="9801152at2"/>
<dbReference type="PhylomeDB" id="Q88Z28"/>
<dbReference type="Proteomes" id="UP000000432">
    <property type="component" value="Chromosome"/>
</dbReference>
<dbReference type="GO" id="GO:0005829">
    <property type="term" value="C:cytosol"/>
    <property type="evidence" value="ECO:0007669"/>
    <property type="project" value="TreeGrafter"/>
</dbReference>
<dbReference type="GO" id="GO:0005524">
    <property type="term" value="F:ATP binding"/>
    <property type="evidence" value="ECO:0007669"/>
    <property type="project" value="UniProtKB-UniRule"/>
</dbReference>
<dbReference type="GO" id="GO:0140096">
    <property type="term" value="F:catalytic activity, acting on a protein"/>
    <property type="evidence" value="ECO:0007669"/>
    <property type="project" value="UniProtKB-ARBA"/>
</dbReference>
<dbReference type="GO" id="GO:0004824">
    <property type="term" value="F:lysine-tRNA ligase activity"/>
    <property type="evidence" value="ECO:0007669"/>
    <property type="project" value="UniProtKB-UniRule"/>
</dbReference>
<dbReference type="GO" id="GO:0000287">
    <property type="term" value="F:magnesium ion binding"/>
    <property type="evidence" value="ECO:0007669"/>
    <property type="project" value="UniProtKB-UniRule"/>
</dbReference>
<dbReference type="GO" id="GO:0016740">
    <property type="term" value="F:transferase activity"/>
    <property type="evidence" value="ECO:0007669"/>
    <property type="project" value="UniProtKB-ARBA"/>
</dbReference>
<dbReference type="GO" id="GO:0000049">
    <property type="term" value="F:tRNA binding"/>
    <property type="evidence" value="ECO:0007669"/>
    <property type="project" value="TreeGrafter"/>
</dbReference>
<dbReference type="GO" id="GO:0006430">
    <property type="term" value="P:lysyl-tRNA aminoacylation"/>
    <property type="evidence" value="ECO:0007669"/>
    <property type="project" value="UniProtKB-UniRule"/>
</dbReference>
<dbReference type="CDD" id="cd00775">
    <property type="entry name" value="LysRS_core"/>
    <property type="match status" value="1"/>
</dbReference>
<dbReference type="CDD" id="cd04322">
    <property type="entry name" value="LysRS_N"/>
    <property type="match status" value="1"/>
</dbReference>
<dbReference type="FunFam" id="2.40.50.140:FF:000024">
    <property type="entry name" value="Lysine--tRNA ligase"/>
    <property type="match status" value="1"/>
</dbReference>
<dbReference type="FunFam" id="3.30.930.10:FF:000001">
    <property type="entry name" value="Lysine--tRNA ligase"/>
    <property type="match status" value="1"/>
</dbReference>
<dbReference type="Gene3D" id="3.30.930.10">
    <property type="entry name" value="Bira Bifunctional Protein, Domain 2"/>
    <property type="match status" value="1"/>
</dbReference>
<dbReference type="Gene3D" id="2.40.50.140">
    <property type="entry name" value="Nucleic acid-binding proteins"/>
    <property type="match status" value="1"/>
</dbReference>
<dbReference type="HAMAP" id="MF_00252">
    <property type="entry name" value="Lys_tRNA_synth_class2"/>
    <property type="match status" value="1"/>
</dbReference>
<dbReference type="InterPro" id="IPR004364">
    <property type="entry name" value="Aa-tRNA-synt_II"/>
</dbReference>
<dbReference type="InterPro" id="IPR006195">
    <property type="entry name" value="aa-tRNA-synth_II"/>
</dbReference>
<dbReference type="InterPro" id="IPR045864">
    <property type="entry name" value="aa-tRNA-synth_II/BPL/LPL"/>
</dbReference>
<dbReference type="InterPro" id="IPR002313">
    <property type="entry name" value="Lys-tRNA-ligase_II"/>
</dbReference>
<dbReference type="InterPro" id="IPR044136">
    <property type="entry name" value="Lys-tRNA-ligase_II_N"/>
</dbReference>
<dbReference type="InterPro" id="IPR018149">
    <property type="entry name" value="Lys-tRNA-synth_II_C"/>
</dbReference>
<dbReference type="InterPro" id="IPR012340">
    <property type="entry name" value="NA-bd_OB-fold"/>
</dbReference>
<dbReference type="InterPro" id="IPR004365">
    <property type="entry name" value="NA-bd_OB_tRNA"/>
</dbReference>
<dbReference type="NCBIfam" id="TIGR00499">
    <property type="entry name" value="lysS_bact"/>
    <property type="match status" value="1"/>
</dbReference>
<dbReference type="NCBIfam" id="NF001756">
    <property type="entry name" value="PRK00484.1"/>
    <property type="match status" value="1"/>
</dbReference>
<dbReference type="PANTHER" id="PTHR42918:SF15">
    <property type="entry name" value="LYSINE--TRNA LIGASE, CHLOROPLASTIC_MITOCHONDRIAL"/>
    <property type="match status" value="1"/>
</dbReference>
<dbReference type="PANTHER" id="PTHR42918">
    <property type="entry name" value="LYSYL-TRNA SYNTHETASE"/>
    <property type="match status" value="1"/>
</dbReference>
<dbReference type="Pfam" id="PF00152">
    <property type="entry name" value="tRNA-synt_2"/>
    <property type="match status" value="1"/>
</dbReference>
<dbReference type="Pfam" id="PF01336">
    <property type="entry name" value="tRNA_anti-codon"/>
    <property type="match status" value="1"/>
</dbReference>
<dbReference type="PRINTS" id="PR00982">
    <property type="entry name" value="TRNASYNTHLYS"/>
</dbReference>
<dbReference type="SUPFAM" id="SSF55681">
    <property type="entry name" value="Class II aaRS and biotin synthetases"/>
    <property type="match status" value="1"/>
</dbReference>
<dbReference type="SUPFAM" id="SSF50249">
    <property type="entry name" value="Nucleic acid-binding proteins"/>
    <property type="match status" value="1"/>
</dbReference>
<dbReference type="PROSITE" id="PS50862">
    <property type="entry name" value="AA_TRNA_LIGASE_II"/>
    <property type="match status" value="1"/>
</dbReference>
<comment type="catalytic activity">
    <reaction evidence="1">
        <text>tRNA(Lys) + L-lysine + ATP = L-lysyl-tRNA(Lys) + AMP + diphosphate</text>
        <dbReference type="Rhea" id="RHEA:20792"/>
        <dbReference type="Rhea" id="RHEA-COMP:9696"/>
        <dbReference type="Rhea" id="RHEA-COMP:9697"/>
        <dbReference type="ChEBI" id="CHEBI:30616"/>
        <dbReference type="ChEBI" id="CHEBI:32551"/>
        <dbReference type="ChEBI" id="CHEBI:33019"/>
        <dbReference type="ChEBI" id="CHEBI:78442"/>
        <dbReference type="ChEBI" id="CHEBI:78529"/>
        <dbReference type="ChEBI" id="CHEBI:456215"/>
        <dbReference type="EC" id="6.1.1.6"/>
    </reaction>
</comment>
<comment type="cofactor">
    <cofactor evidence="1">
        <name>Mg(2+)</name>
        <dbReference type="ChEBI" id="CHEBI:18420"/>
    </cofactor>
    <text evidence="1">Binds 3 Mg(2+) ions per subunit.</text>
</comment>
<comment type="subunit">
    <text evidence="1">Homodimer.</text>
</comment>
<comment type="subcellular location">
    <subcellularLocation>
        <location evidence="1">Cytoplasm</location>
    </subcellularLocation>
</comment>
<comment type="similarity">
    <text evidence="1">Belongs to the class-II aminoacyl-tRNA synthetase family.</text>
</comment>
<sequence length="499" mass="57629">MARQEQTMNDQLKVRREKMDELREEGIDPFGHRFERTDLAQDLQDKYGDMDKDELDAKQVVATIAGRMLAKRGKGKVGFADIWDRSGKMQLYIRKDVVGEDTYHIFKRSDIGDFLGITGQVFKTDFGELTIKVTGLTFLSKALRPLPDKFHGLQNVEQIYRQRYLDLISNRDSFDRFLKRTKIISAIRHHLDDQGFTEVETPMLHNQAGGAAARPFVTHHNALNIDLYLRIALELHLKRLIVGGMEKVYEIGRVFRNEGMDREHNPEFTMMETYVAYFDFHDVMAETEGIFKAAAQAVTDDGIVTYHDQKVDFNQPFKQIHMVDAIKEKTGIDFWQPMSIEDAQKLADEHHVKYEPYWKVGHIINAFFEEFVEDTLNEPTFVYGHPVEISPLAKKNEEDPRFTDRFELFILGNEYANAFSELNDPIDQRQRFEAQAAERTAGNDEAEHIDEDFVEALEYGMPPTGGLGIGIDRLVMLMTDADSIRDVLLFPTMRPEEDK</sequence>
<keyword id="KW-0030">Aminoacyl-tRNA synthetase</keyword>
<keyword id="KW-0067">ATP-binding</keyword>
<keyword id="KW-0963">Cytoplasm</keyword>
<keyword id="KW-0436">Ligase</keyword>
<keyword id="KW-0460">Magnesium</keyword>
<keyword id="KW-0479">Metal-binding</keyword>
<keyword id="KW-0547">Nucleotide-binding</keyword>
<keyword id="KW-0648">Protein biosynthesis</keyword>
<keyword id="KW-1185">Reference proteome</keyword>
<gene>
    <name evidence="1" type="primary">lysS</name>
    <name type="ordered locus">lp_0550</name>
</gene>
<accession>Q88Z28</accession>
<accession>F9UL23</accession>